<name>URE3_ECO5E</name>
<feature type="chain" id="PRO_1000199863" description="Urease subunit gamma">
    <location>
        <begin position="1"/>
        <end position="100"/>
    </location>
</feature>
<reference key="1">
    <citation type="journal article" date="2011" name="Proc. Natl. Acad. Sci. U.S.A.">
        <title>Genomic anatomy of Escherichia coli O157:H7 outbreaks.</title>
        <authorList>
            <person name="Eppinger M."/>
            <person name="Mammel M.K."/>
            <person name="Leclerc J.E."/>
            <person name="Ravel J."/>
            <person name="Cebula T.A."/>
        </authorList>
    </citation>
    <scope>NUCLEOTIDE SEQUENCE [LARGE SCALE GENOMIC DNA]</scope>
    <source>
        <strain>EC4115 / EHEC</strain>
    </source>
</reference>
<dbReference type="EC" id="3.5.1.5" evidence="1"/>
<dbReference type="EMBL" id="CP001164">
    <property type="protein sequence ID" value="ACI37133.1"/>
    <property type="molecule type" value="Genomic_DNA"/>
</dbReference>
<dbReference type="RefSeq" id="WP_000424145.1">
    <property type="nucleotide sequence ID" value="NC_011353.1"/>
</dbReference>
<dbReference type="SMR" id="B5YUX1"/>
<dbReference type="KEGG" id="ecf:ECH74115_1321"/>
<dbReference type="HOGENOM" id="CLU_145825_1_0_6"/>
<dbReference type="UniPathway" id="UPA00258">
    <property type="reaction ID" value="UER00370"/>
</dbReference>
<dbReference type="GO" id="GO:0005737">
    <property type="term" value="C:cytoplasm"/>
    <property type="evidence" value="ECO:0007669"/>
    <property type="project" value="UniProtKB-SubCell"/>
</dbReference>
<dbReference type="GO" id="GO:0016151">
    <property type="term" value="F:nickel cation binding"/>
    <property type="evidence" value="ECO:0007669"/>
    <property type="project" value="InterPro"/>
</dbReference>
<dbReference type="GO" id="GO:0009039">
    <property type="term" value="F:urease activity"/>
    <property type="evidence" value="ECO:0007669"/>
    <property type="project" value="UniProtKB-UniRule"/>
</dbReference>
<dbReference type="GO" id="GO:0043419">
    <property type="term" value="P:urea catabolic process"/>
    <property type="evidence" value="ECO:0007669"/>
    <property type="project" value="UniProtKB-UniRule"/>
</dbReference>
<dbReference type="CDD" id="cd00390">
    <property type="entry name" value="Urease_gamma"/>
    <property type="match status" value="1"/>
</dbReference>
<dbReference type="Gene3D" id="3.30.280.10">
    <property type="entry name" value="Urease, gamma-like subunit"/>
    <property type="match status" value="1"/>
</dbReference>
<dbReference type="HAMAP" id="MF_00739">
    <property type="entry name" value="Urease_gamma"/>
    <property type="match status" value="1"/>
</dbReference>
<dbReference type="InterPro" id="IPR012010">
    <property type="entry name" value="Urease_gamma"/>
</dbReference>
<dbReference type="InterPro" id="IPR002026">
    <property type="entry name" value="Urease_gamma/gamma-beta_su"/>
</dbReference>
<dbReference type="InterPro" id="IPR036463">
    <property type="entry name" value="Urease_gamma_sf"/>
</dbReference>
<dbReference type="InterPro" id="IPR050069">
    <property type="entry name" value="Urease_subunit"/>
</dbReference>
<dbReference type="NCBIfam" id="NF009712">
    <property type="entry name" value="PRK13241.1"/>
    <property type="match status" value="1"/>
</dbReference>
<dbReference type="NCBIfam" id="TIGR00193">
    <property type="entry name" value="urease_gam"/>
    <property type="match status" value="1"/>
</dbReference>
<dbReference type="PANTHER" id="PTHR33569">
    <property type="entry name" value="UREASE"/>
    <property type="match status" value="1"/>
</dbReference>
<dbReference type="PANTHER" id="PTHR33569:SF1">
    <property type="entry name" value="UREASE"/>
    <property type="match status" value="1"/>
</dbReference>
<dbReference type="Pfam" id="PF00547">
    <property type="entry name" value="Urease_gamma"/>
    <property type="match status" value="1"/>
</dbReference>
<dbReference type="PIRSF" id="PIRSF001223">
    <property type="entry name" value="Urease_gamma"/>
    <property type="match status" value="1"/>
</dbReference>
<dbReference type="SUPFAM" id="SSF54111">
    <property type="entry name" value="Urease, gamma-subunit"/>
    <property type="match status" value="1"/>
</dbReference>
<proteinExistence type="inferred from homology"/>
<comment type="catalytic activity">
    <reaction evidence="1">
        <text>urea + 2 H2O + H(+) = hydrogencarbonate + 2 NH4(+)</text>
        <dbReference type="Rhea" id="RHEA:20557"/>
        <dbReference type="ChEBI" id="CHEBI:15377"/>
        <dbReference type="ChEBI" id="CHEBI:15378"/>
        <dbReference type="ChEBI" id="CHEBI:16199"/>
        <dbReference type="ChEBI" id="CHEBI:17544"/>
        <dbReference type="ChEBI" id="CHEBI:28938"/>
        <dbReference type="EC" id="3.5.1.5"/>
    </reaction>
</comment>
<comment type="pathway">
    <text evidence="1">Nitrogen metabolism; urea degradation; CO(2) and NH(3) from urea (urease route): step 1/1.</text>
</comment>
<comment type="subunit">
    <text evidence="1">Heterotrimer of UreA (gamma), UreB (beta) and UreC (alpha) subunits. Three heterotrimers associate to form the active enzyme.</text>
</comment>
<comment type="subcellular location">
    <subcellularLocation>
        <location evidence="1">Cytoplasm</location>
    </subcellularLocation>
</comment>
<comment type="similarity">
    <text evidence="1">Belongs to the urease gamma subunit family.</text>
</comment>
<accession>B5YUX1</accession>
<protein>
    <recommendedName>
        <fullName evidence="1">Urease subunit gamma</fullName>
        <ecNumber evidence="1">3.5.1.5</ecNumber>
    </recommendedName>
    <alternativeName>
        <fullName evidence="1">Urea amidohydrolase subunit gamma</fullName>
    </alternativeName>
</protein>
<organism>
    <name type="scientific">Escherichia coli O157:H7 (strain EC4115 / EHEC)</name>
    <dbReference type="NCBI Taxonomy" id="444450"/>
    <lineage>
        <taxon>Bacteria</taxon>
        <taxon>Pseudomonadati</taxon>
        <taxon>Pseudomonadota</taxon>
        <taxon>Gammaproteobacteria</taxon>
        <taxon>Enterobacterales</taxon>
        <taxon>Enterobacteriaceae</taxon>
        <taxon>Escherichia</taxon>
    </lineage>
</organism>
<evidence type="ECO:0000255" key="1">
    <source>
        <dbReference type="HAMAP-Rule" id="MF_00739"/>
    </source>
</evidence>
<sequence length="100" mass="11085">MELTPREKDKLLLFTAALLAERRLARGLKLNYPESVALISAFIMEGARDGKSVAALMEEGRHVLSREQVMEGIPEMIPDIQVEATFPDGSKLVTVHNPII</sequence>
<gene>
    <name evidence="1" type="primary">ureA</name>
    <name type="ordered locus">ECH74115_1321</name>
</gene>
<keyword id="KW-0963">Cytoplasm</keyword>
<keyword id="KW-0378">Hydrolase</keyword>